<name>HEM3_PROMM</name>
<proteinExistence type="inferred from homology"/>
<sequence length="317" mass="34337">MVLTQLRIASRRSQLAMVQTNWVQAELEQAHPGLSISVEAMATQGDKILDVALAKIGDKGLFTKELEAQMLVGRADIAVHSLKDLPTNLPEGLMLGCVTEREDPADALVVNQKNAEHQLDTLPEGAIVGTSSLRRLAQLRHHYPHLVFKDVRGNVITRLEKLDAGNYDCLILAAAGLTRLGFGDRIHQLIPSEISLHAVGQGALGIECVEGHPEVLEAIKALEHKPTAQRCLAERALLRELEGGCQVPIGVNSRIEANELLLTGMVASLDGKRLIRDQQRGPIDRCEAIGKELAETLKSQGAGEILAEIFAAVRPEA</sequence>
<accession>Q7V697</accession>
<dbReference type="EC" id="2.5.1.61" evidence="1"/>
<dbReference type="EMBL" id="BX548175">
    <property type="protein sequence ID" value="CAE21448.1"/>
    <property type="molecule type" value="Genomic_DNA"/>
</dbReference>
<dbReference type="RefSeq" id="WP_011130642.1">
    <property type="nucleotide sequence ID" value="NC_005071.1"/>
</dbReference>
<dbReference type="SMR" id="Q7V697"/>
<dbReference type="KEGG" id="pmt:PMT_1273"/>
<dbReference type="eggNOG" id="COG0181">
    <property type="taxonomic scope" value="Bacteria"/>
</dbReference>
<dbReference type="HOGENOM" id="CLU_019704_0_2_3"/>
<dbReference type="OrthoDB" id="9810298at2"/>
<dbReference type="UniPathway" id="UPA00251">
    <property type="reaction ID" value="UER00319"/>
</dbReference>
<dbReference type="UniPathway" id="UPA00668"/>
<dbReference type="Proteomes" id="UP000001423">
    <property type="component" value="Chromosome"/>
</dbReference>
<dbReference type="GO" id="GO:0005737">
    <property type="term" value="C:cytoplasm"/>
    <property type="evidence" value="ECO:0007669"/>
    <property type="project" value="TreeGrafter"/>
</dbReference>
<dbReference type="GO" id="GO:0004418">
    <property type="term" value="F:hydroxymethylbilane synthase activity"/>
    <property type="evidence" value="ECO:0007669"/>
    <property type="project" value="UniProtKB-UniRule"/>
</dbReference>
<dbReference type="GO" id="GO:0015995">
    <property type="term" value="P:chlorophyll biosynthetic process"/>
    <property type="evidence" value="ECO:0007669"/>
    <property type="project" value="UniProtKB-UniRule"/>
</dbReference>
<dbReference type="GO" id="GO:0006782">
    <property type="term" value="P:protoporphyrinogen IX biosynthetic process"/>
    <property type="evidence" value="ECO:0007669"/>
    <property type="project" value="UniProtKB-UniRule"/>
</dbReference>
<dbReference type="CDD" id="cd13645">
    <property type="entry name" value="PBP2_HuPBGD_like"/>
    <property type="match status" value="1"/>
</dbReference>
<dbReference type="FunFam" id="3.30.160.40:FF:000002">
    <property type="entry name" value="Porphobilinogen deaminase"/>
    <property type="match status" value="1"/>
</dbReference>
<dbReference type="FunFam" id="3.40.190.10:FF:000004">
    <property type="entry name" value="Porphobilinogen deaminase"/>
    <property type="match status" value="1"/>
</dbReference>
<dbReference type="FunFam" id="3.40.190.10:FF:000005">
    <property type="entry name" value="Porphobilinogen deaminase"/>
    <property type="match status" value="1"/>
</dbReference>
<dbReference type="Gene3D" id="3.40.190.10">
    <property type="entry name" value="Periplasmic binding protein-like II"/>
    <property type="match status" value="2"/>
</dbReference>
<dbReference type="Gene3D" id="3.30.160.40">
    <property type="entry name" value="Porphobilinogen deaminase, C-terminal domain"/>
    <property type="match status" value="1"/>
</dbReference>
<dbReference type="HAMAP" id="MF_00260">
    <property type="entry name" value="Porphobil_deam"/>
    <property type="match status" value="1"/>
</dbReference>
<dbReference type="InterPro" id="IPR000860">
    <property type="entry name" value="HemC"/>
</dbReference>
<dbReference type="InterPro" id="IPR022419">
    <property type="entry name" value="Porphobilin_deaminase_cofac_BS"/>
</dbReference>
<dbReference type="InterPro" id="IPR022417">
    <property type="entry name" value="Porphobilin_deaminase_N"/>
</dbReference>
<dbReference type="InterPro" id="IPR022418">
    <property type="entry name" value="Porphobilinogen_deaminase_C"/>
</dbReference>
<dbReference type="InterPro" id="IPR036803">
    <property type="entry name" value="Porphobilinogen_deaminase_C_sf"/>
</dbReference>
<dbReference type="NCBIfam" id="TIGR00212">
    <property type="entry name" value="hemC"/>
    <property type="match status" value="1"/>
</dbReference>
<dbReference type="PANTHER" id="PTHR11557">
    <property type="entry name" value="PORPHOBILINOGEN DEAMINASE"/>
    <property type="match status" value="1"/>
</dbReference>
<dbReference type="PANTHER" id="PTHR11557:SF0">
    <property type="entry name" value="PORPHOBILINOGEN DEAMINASE"/>
    <property type="match status" value="1"/>
</dbReference>
<dbReference type="Pfam" id="PF01379">
    <property type="entry name" value="Porphobil_deam"/>
    <property type="match status" value="1"/>
</dbReference>
<dbReference type="Pfam" id="PF03900">
    <property type="entry name" value="Porphobil_deamC"/>
    <property type="match status" value="1"/>
</dbReference>
<dbReference type="PIRSF" id="PIRSF001438">
    <property type="entry name" value="4pyrrol_synth_OHMeBilane_synth"/>
    <property type="match status" value="1"/>
</dbReference>
<dbReference type="PRINTS" id="PR00151">
    <property type="entry name" value="PORPHBDMNASE"/>
</dbReference>
<dbReference type="SUPFAM" id="SSF53850">
    <property type="entry name" value="Periplasmic binding protein-like II"/>
    <property type="match status" value="1"/>
</dbReference>
<dbReference type="SUPFAM" id="SSF54782">
    <property type="entry name" value="Porphobilinogen deaminase (hydroxymethylbilane synthase), C-terminal domain"/>
    <property type="match status" value="1"/>
</dbReference>
<dbReference type="PROSITE" id="PS00533">
    <property type="entry name" value="PORPHOBILINOGEN_DEAM"/>
    <property type="match status" value="1"/>
</dbReference>
<evidence type="ECO:0000255" key="1">
    <source>
        <dbReference type="HAMAP-Rule" id="MF_00260"/>
    </source>
</evidence>
<gene>
    <name evidence="1" type="primary">hemC</name>
    <name type="ordered locus">PMT_1273</name>
</gene>
<organism>
    <name type="scientific">Prochlorococcus marinus (strain MIT 9313)</name>
    <dbReference type="NCBI Taxonomy" id="74547"/>
    <lineage>
        <taxon>Bacteria</taxon>
        <taxon>Bacillati</taxon>
        <taxon>Cyanobacteriota</taxon>
        <taxon>Cyanophyceae</taxon>
        <taxon>Synechococcales</taxon>
        <taxon>Prochlorococcaceae</taxon>
        <taxon>Prochlorococcus</taxon>
    </lineage>
</organism>
<feature type="chain" id="PRO_0000142972" description="Porphobilinogen deaminase">
    <location>
        <begin position="1"/>
        <end position="317"/>
    </location>
</feature>
<feature type="modified residue" description="S-(dipyrrolylmethanemethyl)cysteine" evidence="1">
    <location>
        <position position="245"/>
    </location>
</feature>
<protein>
    <recommendedName>
        <fullName evidence="1">Porphobilinogen deaminase</fullName>
        <shortName evidence="1">PBG</shortName>
        <ecNumber evidence="1">2.5.1.61</ecNumber>
    </recommendedName>
    <alternativeName>
        <fullName evidence="1">Hydroxymethylbilane synthase</fullName>
        <shortName evidence="1">HMBS</shortName>
    </alternativeName>
    <alternativeName>
        <fullName evidence="1">Pre-uroporphyrinogen synthase</fullName>
    </alternativeName>
</protein>
<keyword id="KW-0149">Chlorophyll biosynthesis</keyword>
<keyword id="KW-0627">Porphyrin biosynthesis</keyword>
<keyword id="KW-1185">Reference proteome</keyword>
<keyword id="KW-0808">Transferase</keyword>
<comment type="function">
    <text evidence="1">Tetrapolymerization of the monopyrrole PBG into the hydroxymethylbilane pre-uroporphyrinogen in several discrete steps.</text>
</comment>
<comment type="catalytic activity">
    <reaction evidence="1">
        <text>4 porphobilinogen + H2O = hydroxymethylbilane + 4 NH4(+)</text>
        <dbReference type="Rhea" id="RHEA:13185"/>
        <dbReference type="ChEBI" id="CHEBI:15377"/>
        <dbReference type="ChEBI" id="CHEBI:28938"/>
        <dbReference type="ChEBI" id="CHEBI:57845"/>
        <dbReference type="ChEBI" id="CHEBI:58126"/>
        <dbReference type="EC" id="2.5.1.61"/>
    </reaction>
</comment>
<comment type="cofactor">
    <cofactor evidence="1">
        <name>dipyrromethane</name>
        <dbReference type="ChEBI" id="CHEBI:60342"/>
    </cofactor>
    <text evidence="1">Binds 1 dipyrromethane group covalently.</text>
</comment>
<comment type="pathway">
    <text evidence="1">Porphyrin-containing compound metabolism; protoporphyrin-IX biosynthesis; coproporphyrinogen-III from 5-aminolevulinate: step 2/4.</text>
</comment>
<comment type="pathway">
    <text evidence="1">Porphyrin-containing compound metabolism; chlorophyll biosynthesis.</text>
</comment>
<comment type="subunit">
    <text evidence="1">Monomer.</text>
</comment>
<comment type="miscellaneous">
    <text evidence="1">The porphobilinogen subunits are added to the dipyrromethane group.</text>
</comment>
<comment type="similarity">
    <text evidence="1">Belongs to the HMBS family.</text>
</comment>
<reference key="1">
    <citation type="journal article" date="2003" name="Nature">
        <title>Genome divergence in two Prochlorococcus ecotypes reflects oceanic niche differentiation.</title>
        <authorList>
            <person name="Rocap G."/>
            <person name="Larimer F.W."/>
            <person name="Lamerdin J.E."/>
            <person name="Malfatti S."/>
            <person name="Chain P."/>
            <person name="Ahlgren N.A."/>
            <person name="Arellano A."/>
            <person name="Coleman M."/>
            <person name="Hauser L."/>
            <person name="Hess W.R."/>
            <person name="Johnson Z.I."/>
            <person name="Land M.L."/>
            <person name="Lindell D."/>
            <person name="Post A.F."/>
            <person name="Regala W."/>
            <person name="Shah M."/>
            <person name="Shaw S.L."/>
            <person name="Steglich C."/>
            <person name="Sullivan M.B."/>
            <person name="Ting C.S."/>
            <person name="Tolonen A."/>
            <person name="Webb E.A."/>
            <person name="Zinser E.R."/>
            <person name="Chisholm S.W."/>
        </authorList>
    </citation>
    <scope>NUCLEOTIDE SEQUENCE [LARGE SCALE GENOMIC DNA]</scope>
    <source>
        <strain>MIT 9313</strain>
    </source>
</reference>